<gene>
    <name evidence="1" type="primary">petB</name>
    <name type="ordered locus">Tery_1137</name>
</gene>
<evidence type="ECO:0000255" key="1">
    <source>
        <dbReference type="HAMAP-Rule" id="MF_00633"/>
    </source>
</evidence>
<keyword id="KW-0249">Electron transport</keyword>
<keyword id="KW-0349">Heme</keyword>
<keyword id="KW-0408">Iron</keyword>
<keyword id="KW-0472">Membrane</keyword>
<keyword id="KW-0479">Metal-binding</keyword>
<keyword id="KW-0602">Photosynthesis</keyword>
<keyword id="KW-0793">Thylakoid</keyword>
<keyword id="KW-0812">Transmembrane</keyword>
<keyword id="KW-1133">Transmembrane helix</keyword>
<keyword id="KW-0813">Transport</keyword>
<reference key="1">
    <citation type="journal article" date="2015" name="Proc. Natl. Acad. Sci. U.S.A.">
        <title>Trichodesmium genome maintains abundant, widespread noncoding DNA in situ, despite oligotrophic lifestyle.</title>
        <authorList>
            <person name="Walworth N."/>
            <person name="Pfreundt U."/>
            <person name="Nelson W.C."/>
            <person name="Mincer T."/>
            <person name="Heidelberg J.F."/>
            <person name="Fu F."/>
            <person name="Waterbury J.B."/>
            <person name="Glavina del Rio T."/>
            <person name="Goodwin L."/>
            <person name="Kyrpides N.C."/>
            <person name="Land M.L."/>
            <person name="Woyke T."/>
            <person name="Hutchins D.A."/>
            <person name="Hess W.R."/>
            <person name="Webb E.A."/>
        </authorList>
    </citation>
    <scope>NUCLEOTIDE SEQUENCE [LARGE SCALE GENOMIC DNA]</scope>
    <source>
        <strain>IMS101</strain>
    </source>
</reference>
<comment type="function">
    <text evidence="1">Component of the cytochrome b6-f complex, which mediates electron transfer between photosystem II (PSII) and photosystem I (PSI), cyclic electron flow around PSI, and state transitions.</text>
</comment>
<comment type="cofactor">
    <cofactor evidence="1">
        <name>heme b</name>
        <dbReference type="ChEBI" id="CHEBI:60344"/>
    </cofactor>
    <text evidence="1">Binds 2 heme b groups non-covalently with two histidine residues as axial ligands.</text>
</comment>
<comment type="cofactor">
    <cofactor evidence="1">
        <name>heme c</name>
        <dbReference type="ChEBI" id="CHEBI:61717"/>
    </cofactor>
    <text evidence="1">Binds one heme group covalently by a single cysteine link with no axial amino acid ligand. This heme was named heme ci.</text>
</comment>
<comment type="subunit">
    <text evidence="1">The 4 large subunits of the cytochrome b6-f complex are cytochrome b6, subunit IV (17 kDa polypeptide, PetD), cytochrome f and the Rieske protein, while the 4 small subunits are PetG, PetL, PetM and PetN. The complex functions as a dimer.</text>
</comment>
<comment type="subcellular location">
    <subcellularLocation>
        <location evidence="1">Cellular thylakoid membrane</location>
        <topology evidence="1">Multi-pass membrane protein</topology>
    </subcellularLocation>
</comment>
<comment type="miscellaneous">
    <text evidence="1">Heme 1 (or BH or b566) is high-potential and absorbs at about 566 nm, and heme 2 (or BL or b562) is low-potential and absorbs at about 562 nm.</text>
</comment>
<comment type="similarity">
    <text evidence="1">Belongs to the cytochrome b family. PetB subfamily.</text>
</comment>
<name>CYB6_TRIEI</name>
<accession>Q116S5</accession>
<protein>
    <recommendedName>
        <fullName evidence="1">Cytochrome b6</fullName>
    </recommendedName>
</protein>
<dbReference type="EMBL" id="CP000393">
    <property type="protein sequence ID" value="ABG50499.1"/>
    <property type="molecule type" value="Genomic_DNA"/>
</dbReference>
<dbReference type="RefSeq" id="WP_011610885.1">
    <property type="nucleotide sequence ID" value="NC_008312.1"/>
</dbReference>
<dbReference type="SMR" id="Q116S5"/>
<dbReference type="STRING" id="203124.Tery_1137"/>
<dbReference type="KEGG" id="ter:Tery_1137"/>
<dbReference type="eggNOG" id="COG1290">
    <property type="taxonomic scope" value="Bacteria"/>
</dbReference>
<dbReference type="HOGENOM" id="CLU_031114_0_2_3"/>
<dbReference type="OrthoDB" id="9804503at2"/>
<dbReference type="GO" id="GO:0031676">
    <property type="term" value="C:plasma membrane-derived thylakoid membrane"/>
    <property type="evidence" value="ECO:0007669"/>
    <property type="project" value="UniProtKB-SubCell"/>
</dbReference>
<dbReference type="GO" id="GO:0045158">
    <property type="term" value="F:electron transporter, transferring electrons within cytochrome b6/f complex of photosystem II activity"/>
    <property type="evidence" value="ECO:0007669"/>
    <property type="project" value="UniProtKB-UniRule"/>
</dbReference>
<dbReference type="GO" id="GO:0046872">
    <property type="term" value="F:metal ion binding"/>
    <property type="evidence" value="ECO:0007669"/>
    <property type="project" value="UniProtKB-KW"/>
</dbReference>
<dbReference type="GO" id="GO:0016491">
    <property type="term" value="F:oxidoreductase activity"/>
    <property type="evidence" value="ECO:0007669"/>
    <property type="project" value="InterPro"/>
</dbReference>
<dbReference type="GO" id="GO:0015979">
    <property type="term" value="P:photosynthesis"/>
    <property type="evidence" value="ECO:0007669"/>
    <property type="project" value="UniProtKB-UniRule"/>
</dbReference>
<dbReference type="GO" id="GO:0022904">
    <property type="term" value="P:respiratory electron transport chain"/>
    <property type="evidence" value="ECO:0007669"/>
    <property type="project" value="InterPro"/>
</dbReference>
<dbReference type="CDD" id="cd00284">
    <property type="entry name" value="Cytochrome_b_N"/>
    <property type="match status" value="1"/>
</dbReference>
<dbReference type="FunFam" id="1.20.810.10:FF:000001">
    <property type="entry name" value="Cytochrome b6"/>
    <property type="match status" value="1"/>
</dbReference>
<dbReference type="Gene3D" id="1.20.810.10">
    <property type="entry name" value="Cytochrome Bc1 Complex, Chain C"/>
    <property type="match status" value="1"/>
</dbReference>
<dbReference type="HAMAP" id="MF_00633">
    <property type="entry name" value="Cytb6_f_cytb6"/>
    <property type="match status" value="1"/>
</dbReference>
<dbReference type="InterPro" id="IPR005797">
    <property type="entry name" value="Cyt_b/b6_N"/>
</dbReference>
<dbReference type="InterPro" id="IPR023530">
    <property type="entry name" value="Cyt_B6_PetB"/>
</dbReference>
<dbReference type="InterPro" id="IPR027387">
    <property type="entry name" value="Cytb/b6-like_sf"/>
</dbReference>
<dbReference type="InterPro" id="IPR048259">
    <property type="entry name" value="Cytochrome_b_N_euk/bac"/>
</dbReference>
<dbReference type="InterPro" id="IPR016174">
    <property type="entry name" value="Di-haem_cyt_TM"/>
</dbReference>
<dbReference type="NCBIfam" id="NF002990">
    <property type="entry name" value="PRK03735.1"/>
    <property type="match status" value="1"/>
</dbReference>
<dbReference type="PANTHER" id="PTHR19271">
    <property type="entry name" value="CYTOCHROME B"/>
    <property type="match status" value="1"/>
</dbReference>
<dbReference type="PANTHER" id="PTHR19271:SF16">
    <property type="entry name" value="CYTOCHROME B"/>
    <property type="match status" value="1"/>
</dbReference>
<dbReference type="Pfam" id="PF00033">
    <property type="entry name" value="Cytochrome_B"/>
    <property type="match status" value="1"/>
</dbReference>
<dbReference type="PIRSF" id="PIRSF000032">
    <property type="entry name" value="Cytochrome_b6"/>
    <property type="match status" value="1"/>
</dbReference>
<dbReference type="SUPFAM" id="SSF81342">
    <property type="entry name" value="Transmembrane di-heme cytochromes"/>
    <property type="match status" value="1"/>
</dbReference>
<dbReference type="PROSITE" id="PS51002">
    <property type="entry name" value="CYTB_NTER"/>
    <property type="match status" value="1"/>
</dbReference>
<sequence>MFSKQVTDSPAYKWFDERLEVQALADDISSKYVPPHVNIFYCLGGITLVCFLIQFATGFAMTFYYKPTVTEALASVQYIMTEVNFGWLIRSIHRWSASMMVLMMILHTFRVYLTGGFKKPRELTWVTGVVMAVITVSFGVTGYSLPWDQIGYWAVKIVSGVPDAIPFVGPFIVELMRGSTSVGQATLTRFYSLHTFVLPWFIAVFMLLHFLMIRKQGISGPL</sequence>
<feature type="chain" id="PRO_1000082638" description="Cytochrome b6">
    <location>
        <begin position="1"/>
        <end position="222"/>
    </location>
</feature>
<feature type="transmembrane region" description="Helical" evidence="1">
    <location>
        <begin position="39"/>
        <end position="59"/>
    </location>
</feature>
<feature type="transmembrane region" description="Helical" evidence="1">
    <location>
        <begin position="97"/>
        <end position="117"/>
    </location>
</feature>
<feature type="transmembrane region" description="Helical" evidence="1">
    <location>
        <begin position="123"/>
        <end position="143"/>
    </location>
</feature>
<feature type="transmembrane region" description="Helical" evidence="1">
    <location>
        <begin position="193"/>
        <end position="213"/>
    </location>
</feature>
<feature type="binding site" description="covalent" evidence="1">
    <location>
        <position position="42"/>
    </location>
    <ligand>
        <name>heme c</name>
        <dbReference type="ChEBI" id="CHEBI:61717"/>
    </ligand>
</feature>
<feature type="binding site" description="axial binding residue" evidence="1">
    <location>
        <position position="93"/>
    </location>
    <ligand>
        <name>heme b</name>
        <dbReference type="ChEBI" id="CHEBI:60344"/>
        <label>2</label>
    </ligand>
    <ligandPart>
        <name>Fe</name>
        <dbReference type="ChEBI" id="CHEBI:18248"/>
    </ligandPart>
</feature>
<feature type="binding site" description="axial binding residue" evidence="1">
    <location>
        <position position="107"/>
    </location>
    <ligand>
        <name>heme b</name>
        <dbReference type="ChEBI" id="CHEBI:60344"/>
        <label>1</label>
    </ligand>
    <ligandPart>
        <name>Fe</name>
        <dbReference type="ChEBI" id="CHEBI:18248"/>
    </ligandPart>
</feature>
<feature type="binding site" description="axial binding residue" evidence="1">
    <location>
        <position position="194"/>
    </location>
    <ligand>
        <name>heme b</name>
        <dbReference type="ChEBI" id="CHEBI:60344"/>
        <label>2</label>
    </ligand>
    <ligandPart>
        <name>Fe</name>
        <dbReference type="ChEBI" id="CHEBI:18248"/>
    </ligandPart>
</feature>
<feature type="binding site" description="axial binding residue" evidence="1">
    <location>
        <position position="209"/>
    </location>
    <ligand>
        <name>heme b</name>
        <dbReference type="ChEBI" id="CHEBI:60344"/>
        <label>1</label>
    </ligand>
    <ligandPart>
        <name>Fe</name>
        <dbReference type="ChEBI" id="CHEBI:18248"/>
    </ligandPart>
</feature>
<organism>
    <name type="scientific">Trichodesmium erythraeum (strain IMS101)</name>
    <dbReference type="NCBI Taxonomy" id="203124"/>
    <lineage>
        <taxon>Bacteria</taxon>
        <taxon>Bacillati</taxon>
        <taxon>Cyanobacteriota</taxon>
        <taxon>Cyanophyceae</taxon>
        <taxon>Oscillatoriophycideae</taxon>
        <taxon>Oscillatoriales</taxon>
        <taxon>Microcoleaceae</taxon>
        <taxon>Trichodesmium</taxon>
    </lineage>
</organism>
<proteinExistence type="inferred from homology"/>